<keyword id="KW-0997">Cell inner membrane</keyword>
<keyword id="KW-1003">Cell membrane</keyword>
<keyword id="KW-0285">Flavoprotein</keyword>
<keyword id="KW-0288">FMN</keyword>
<keyword id="KW-0472">Membrane</keyword>
<keyword id="KW-0520">NAD</keyword>
<keyword id="KW-0560">Oxidoreductase</keyword>
<reference key="1">
    <citation type="journal article" date="2009" name="J. Bacteriol.">
        <title>Genomic sequencing reveals regulatory mutations and recombinational events in the widely used MC4100 lineage of Escherichia coli K-12.</title>
        <authorList>
            <person name="Ferenci T."/>
            <person name="Zhou Z."/>
            <person name="Betteridge T."/>
            <person name="Ren Y."/>
            <person name="Liu Y."/>
            <person name="Feng L."/>
            <person name="Reeves P.R."/>
            <person name="Wang L."/>
        </authorList>
    </citation>
    <scope>NUCLEOTIDE SEQUENCE [LARGE SCALE GENOMIC DNA]</scope>
    <source>
        <strain>K12 / MC4100 / BW2952</strain>
    </source>
</reference>
<comment type="function">
    <text evidence="1">Regulatory subunit of a potassium efflux system that confers protection against electrophiles. Required for full activity of KefC. Shows redox enzymatic activity, but this enzymatic activity is not required for activation of KefC.</text>
</comment>
<comment type="catalytic activity">
    <reaction evidence="1">
        <text>a quinone + NADH + H(+) = a quinol + NAD(+)</text>
        <dbReference type="Rhea" id="RHEA:46160"/>
        <dbReference type="ChEBI" id="CHEBI:15378"/>
        <dbReference type="ChEBI" id="CHEBI:24646"/>
        <dbReference type="ChEBI" id="CHEBI:57540"/>
        <dbReference type="ChEBI" id="CHEBI:57945"/>
        <dbReference type="ChEBI" id="CHEBI:132124"/>
        <dbReference type="EC" id="1.6.5.2"/>
    </reaction>
</comment>
<comment type="catalytic activity">
    <reaction evidence="1">
        <text>a quinone + NADPH + H(+) = a quinol + NADP(+)</text>
        <dbReference type="Rhea" id="RHEA:46164"/>
        <dbReference type="ChEBI" id="CHEBI:15378"/>
        <dbReference type="ChEBI" id="CHEBI:24646"/>
        <dbReference type="ChEBI" id="CHEBI:57783"/>
        <dbReference type="ChEBI" id="CHEBI:58349"/>
        <dbReference type="ChEBI" id="CHEBI:132124"/>
        <dbReference type="EC" id="1.6.5.2"/>
    </reaction>
</comment>
<comment type="cofactor">
    <cofactor evidence="1">
        <name>FMN</name>
        <dbReference type="ChEBI" id="CHEBI:58210"/>
    </cofactor>
</comment>
<comment type="subunit">
    <text evidence="1">Homodimer. Interacts with KefC.</text>
</comment>
<comment type="subcellular location">
    <subcellularLocation>
        <location evidence="1">Cell inner membrane</location>
        <topology evidence="1">Peripheral membrane protein</topology>
        <orientation evidence="1">Cytoplasmic side</orientation>
    </subcellularLocation>
</comment>
<comment type="similarity">
    <text evidence="1">Belongs to the NAD(P)H dehydrogenase (quinone) family. KefF subfamily.</text>
</comment>
<evidence type="ECO:0000255" key="1">
    <source>
        <dbReference type="HAMAP-Rule" id="MF_01414"/>
    </source>
</evidence>
<accession>C4ZPX2</accession>
<sequence length="176" mass="20170">MILIIYAHPYPHHSHANKRMLEQARTLEGVEIRSLYQLYPDFNIDIAAEQEALSRADLIVWQHPMQWYSIPPLLKLWIDKVFSHGWAYGHGGTALHGKHLLWAVTTGGGESHFEIGAHPGFDVLSQPLQATAIYCGLNWLPPFAMHCTFICDDETLEGQARHYKQRLLEWQEAHHG</sequence>
<proteinExistence type="inferred from homology"/>
<name>KEFF_ECOBW</name>
<dbReference type="EC" id="1.6.5.2" evidence="1"/>
<dbReference type="EMBL" id="CP001396">
    <property type="protein sequence ID" value="ACR63120.1"/>
    <property type="molecule type" value="Genomic_DNA"/>
</dbReference>
<dbReference type="RefSeq" id="WP_000600725.1">
    <property type="nucleotide sequence ID" value="NC_012759.1"/>
</dbReference>
<dbReference type="SMR" id="C4ZPX2"/>
<dbReference type="GeneID" id="89519427"/>
<dbReference type="KEGG" id="ebw:BWG_0044"/>
<dbReference type="HOGENOM" id="CLU_058643_0_2_6"/>
<dbReference type="GO" id="GO:0005886">
    <property type="term" value="C:plasma membrane"/>
    <property type="evidence" value="ECO:0007669"/>
    <property type="project" value="UniProtKB-SubCell"/>
</dbReference>
<dbReference type="GO" id="GO:0009055">
    <property type="term" value="F:electron transfer activity"/>
    <property type="evidence" value="ECO:0007669"/>
    <property type="project" value="TreeGrafter"/>
</dbReference>
<dbReference type="GO" id="GO:0010181">
    <property type="term" value="F:FMN binding"/>
    <property type="evidence" value="ECO:0007669"/>
    <property type="project" value="UniProtKB-UniRule"/>
</dbReference>
<dbReference type="GO" id="GO:0050136">
    <property type="term" value="F:NADH:ubiquinone reductase (non-electrogenic) activity"/>
    <property type="evidence" value="ECO:0007669"/>
    <property type="project" value="RHEA"/>
</dbReference>
<dbReference type="GO" id="GO:0008753">
    <property type="term" value="F:NADPH dehydrogenase (quinone) activity"/>
    <property type="evidence" value="ECO:0007669"/>
    <property type="project" value="RHEA"/>
</dbReference>
<dbReference type="GO" id="GO:1901381">
    <property type="term" value="P:positive regulation of potassium ion transmembrane transport"/>
    <property type="evidence" value="ECO:0007669"/>
    <property type="project" value="UniProtKB-UniRule"/>
</dbReference>
<dbReference type="GO" id="GO:0006813">
    <property type="term" value="P:potassium ion transport"/>
    <property type="evidence" value="ECO:0007669"/>
    <property type="project" value="InterPro"/>
</dbReference>
<dbReference type="FunFam" id="3.40.50.360:FF:000008">
    <property type="entry name" value="Glutathione-regulated potassium-efflux system ancillary protein KefF"/>
    <property type="match status" value="1"/>
</dbReference>
<dbReference type="Gene3D" id="3.40.50.360">
    <property type="match status" value="1"/>
</dbReference>
<dbReference type="HAMAP" id="MF_01414">
    <property type="entry name" value="K_H_efflux_KefF"/>
    <property type="match status" value="1"/>
</dbReference>
<dbReference type="InterPro" id="IPR003680">
    <property type="entry name" value="Flavodoxin_fold"/>
</dbReference>
<dbReference type="InterPro" id="IPR029039">
    <property type="entry name" value="Flavoprotein-like_sf"/>
</dbReference>
<dbReference type="InterPro" id="IPR023948">
    <property type="entry name" value="K_H_efflux_KefF"/>
</dbReference>
<dbReference type="InterPro" id="IPR046980">
    <property type="entry name" value="KefG/KefF"/>
</dbReference>
<dbReference type="NCBIfam" id="NF002044">
    <property type="entry name" value="PRK00871.1"/>
    <property type="match status" value="1"/>
</dbReference>
<dbReference type="PANTHER" id="PTHR47307:SF2">
    <property type="entry name" value="GLUTATHIONE-REGULATED POTASSIUM-EFFLUX SYSTEM ANCILLARY PROTEIN KEFF"/>
    <property type="match status" value="1"/>
</dbReference>
<dbReference type="PANTHER" id="PTHR47307">
    <property type="entry name" value="GLUTATHIONE-REGULATED POTASSIUM-EFFLUX SYSTEM ANCILLARY PROTEIN KEFG"/>
    <property type="match status" value="1"/>
</dbReference>
<dbReference type="Pfam" id="PF02525">
    <property type="entry name" value="Flavodoxin_2"/>
    <property type="match status" value="1"/>
</dbReference>
<dbReference type="SUPFAM" id="SSF52218">
    <property type="entry name" value="Flavoproteins"/>
    <property type="match status" value="1"/>
</dbReference>
<organism>
    <name type="scientific">Escherichia coli (strain K12 / MC4100 / BW2952)</name>
    <dbReference type="NCBI Taxonomy" id="595496"/>
    <lineage>
        <taxon>Bacteria</taxon>
        <taxon>Pseudomonadati</taxon>
        <taxon>Pseudomonadota</taxon>
        <taxon>Gammaproteobacteria</taxon>
        <taxon>Enterobacterales</taxon>
        <taxon>Enterobacteriaceae</taxon>
        <taxon>Escherichia</taxon>
    </lineage>
</organism>
<gene>
    <name evidence="1" type="primary">kefF</name>
    <name type="ordered locus">BWG_0044</name>
</gene>
<feature type="chain" id="PRO_1000215225" description="Glutathione-regulated potassium-efflux system ancillary protein KefF">
    <location>
        <begin position="1"/>
        <end position="176"/>
    </location>
</feature>
<feature type="binding site" evidence="1">
    <location>
        <position position="8"/>
    </location>
    <ligand>
        <name>FMN</name>
        <dbReference type="ChEBI" id="CHEBI:58210"/>
    </ligand>
</feature>
<feature type="binding site" evidence="1">
    <location>
        <begin position="14"/>
        <end position="17"/>
    </location>
    <ligand>
        <name>FMN</name>
        <dbReference type="ChEBI" id="CHEBI:58210"/>
    </ligand>
</feature>
<feature type="binding site" evidence="1">
    <location>
        <begin position="65"/>
        <end position="68"/>
    </location>
    <ligand>
        <name>FMN</name>
        <dbReference type="ChEBI" id="CHEBI:58210"/>
    </ligand>
</feature>
<feature type="binding site" evidence="1">
    <location>
        <begin position="105"/>
        <end position="108"/>
    </location>
    <ligand>
        <name>FMN</name>
        <dbReference type="ChEBI" id="CHEBI:58210"/>
    </ligand>
</feature>
<protein>
    <recommendedName>
        <fullName evidence="1">Glutathione-regulated potassium-efflux system ancillary protein KefF</fullName>
    </recommendedName>
    <alternativeName>
        <fullName evidence="1">Quinone oxidoreductase KefF</fullName>
        <ecNumber evidence="1">1.6.5.2</ecNumber>
    </alternativeName>
</protein>